<sequence length="141" mass="16193">MKLETQYHGIIEYNENNIINLVKGMSGFENLKKFILVGIENNEVFSLFHSMEDKETAFIVSSPFYVKADYEVNLSEELVKELKIDSEKDVLIINTVNLSKDIKKMTTNLGAPIIININKHLGKQIIISDDEKMIKYPMIHS</sequence>
<protein>
    <recommendedName>
        <fullName evidence="1">Flagellar assembly factor FliW</fullName>
    </recommendedName>
</protein>
<organism>
    <name type="scientific">Clostridium acetobutylicum (strain ATCC 824 / DSM 792 / JCM 1419 / IAM 19013 / LMG 5710 / NBRC 13948 / NRRL B-527 / VKM B-1787 / 2291 / W)</name>
    <dbReference type="NCBI Taxonomy" id="272562"/>
    <lineage>
        <taxon>Bacteria</taxon>
        <taxon>Bacillati</taxon>
        <taxon>Bacillota</taxon>
        <taxon>Clostridia</taxon>
        <taxon>Eubacteriales</taxon>
        <taxon>Clostridiaceae</taxon>
        <taxon>Clostridium</taxon>
    </lineage>
</organism>
<accession>Q97H05</accession>
<name>FLIW_CLOAB</name>
<evidence type="ECO:0000255" key="1">
    <source>
        <dbReference type="HAMAP-Rule" id="MF_01185"/>
    </source>
</evidence>
<gene>
    <name evidence="1" type="primary">fliW</name>
    <name type="ordered locus">CA_C2210</name>
</gene>
<reference key="1">
    <citation type="journal article" date="2001" name="J. Bacteriol.">
        <title>Genome sequence and comparative analysis of the solvent-producing bacterium Clostridium acetobutylicum.</title>
        <authorList>
            <person name="Noelling J."/>
            <person name="Breton G."/>
            <person name="Omelchenko M.V."/>
            <person name="Makarova K.S."/>
            <person name="Zeng Q."/>
            <person name="Gibson R."/>
            <person name="Lee H.M."/>
            <person name="Dubois J."/>
            <person name="Qiu D."/>
            <person name="Hitti J."/>
            <person name="Wolf Y.I."/>
            <person name="Tatusov R.L."/>
            <person name="Sabathe F."/>
            <person name="Doucette-Stamm L.A."/>
            <person name="Soucaille P."/>
            <person name="Daly M.J."/>
            <person name="Bennett G.N."/>
            <person name="Koonin E.V."/>
            <person name="Smith D.R."/>
        </authorList>
    </citation>
    <scope>NUCLEOTIDE SEQUENCE [LARGE SCALE GENOMIC DNA]</scope>
    <source>
        <strain>ATCC 824 / DSM 792 / JCM 1419 / IAM 19013 / LMG 5710 / NBRC 13948 / NRRL B-527 / VKM B-1787 / 2291 / W</strain>
    </source>
</reference>
<proteinExistence type="inferred from homology"/>
<dbReference type="EMBL" id="AE001437">
    <property type="protein sequence ID" value="AAK80167.1"/>
    <property type="molecule type" value="Genomic_DNA"/>
</dbReference>
<dbReference type="PIR" id="D97172">
    <property type="entry name" value="D97172"/>
</dbReference>
<dbReference type="RefSeq" id="NP_348827.1">
    <property type="nucleotide sequence ID" value="NC_003030.1"/>
</dbReference>
<dbReference type="RefSeq" id="WP_010965508.1">
    <property type="nucleotide sequence ID" value="NC_003030.1"/>
</dbReference>
<dbReference type="SMR" id="Q97H05"/>
<dbReference type="STRING" id="272562.CA_C2210"/>
<dbReference type="GeneID" id="44998689"/>
<dbReference type="KEGG" id="cac:CA_C2210"/>
<dbReference type="PATRIC" id="fig|272562.8.peg.2411"/>
<dbReference type="eggNOG" id="COG1699">
    <property type="taxonomic scope" value="Bacteria"/>
</dbReference>
<dbReference type="HOGENOM" id="CLU_112356_0_2_9"/>
<dbReference type="OrthoDB" id="9801235at2"/>
<dbReference type="Proteomes" id="UP000000814">
    <property type="component" value="Chromosome"/>
</dbReference>
<dbReference type="GO" id="GO:0005737">
    <property type="term" value="C:cytoplasm"/>
    <property type="evidence" value="ECO:0007669"/>
    <property type="project" value="UniProtKB-SubCell"/>
</dbReference>
<dbReference type="GO" id="GO:0044780">
    <property type="term" value="P:bacterial-type flagellum assembly"/>
    <property type="evidence" value="ECO:0007669"/>
    <property type="project" value="UniProtKB-UniRule"/>
</dbReference>
<dbReference type="GO" id="GO:0006417">
    <property type="term" value="P:regulation of translation"/>
    <property type="evidence" value="ECO:0007669"/>
    <property type="project" value="UniProtKB-KW"/>
</dbReference>
<dbReference type="Gene3D" id="2.30.290.10">
    <property type="entry name" value="BH3618-like"/>
    <property type="match status" value="1"/>
</dbReference>
<dbReference type="HAMAP" id="MF_01185">
    <property type="entry name" value="FliW"/>
    <property type="match status" value="1"/>
</dbReference>
<dbReference type="InterPro" id="IPR003775">
    <property type="entry name" value="Flagellar_assembly_factor_FliW"/>
</dbReference>
<dbReference type="InterPro" id="IPR024046">
    <property type="entry name" value="Flagellar_assmbl_FliW_dom_sf"/>
</dbReference>
<dbReference type="NCBIfam" id="NF009793">
    <property type="entry name" value="PRK13285.1-1"/>
    <property type="match status" value="1"/>
</dbReference>
<dbReference type="PANTHER" id="PTHR39190">
    <property type="entry name" value="FLAGELLAR ASSEMBLY FACTOR FLIW"/>
    <property type="match status" value="1"/>
</dbReference>
<dbReference type="PANTHER" id="PTHR39190:SF1">
    <property type="entry name" value="FLAGELLAR ASSEMBLY FACTOR FLIW"/>
    <property type="match status" value="1"/>
</dbReference>
<dbReference type="Pfam" id="PF02623">
    <property type="entry name" value="FliW"/>
    <property type="match status" value="1"/>
</dbReference>
<dbReference type="SUPFAM" id="SSF141457">
    <property type="entry name" value="BH3618-like"/>
    <property type="match status" value="1"/>
</dbReference>
<comment type="function">
    <text evidence="1">Acts as an anti-CsrA protein, binds CsrA and prevents it from repressing translation of its target genes, one of which is flagellin. Binds to flagellin and participates in the assembly of the flagellum.</text>
</comment>
<comment type="subunit">
    <text evidence="1">Interacts with translational regulator CsrA and flagellin(s).</text>
</comment>
<comment type="subcellular location">
    <subcellularLocation>
        <location evidence="1">Cytoplasm</location>
    </subcellularLocation>
</comment>
<comment type="similarity">
    <text evidence="1">Belongs to the FliW family.</text>
</comment>
<keyword id="KW-1005">Bacterial flagellum biogenesis</keyword>
<keyword id="KW-0143">Chaperone</keyword>
<keyword id="KW-0963">Cytoplasm</keyword>
<keyword id="KW-1185">Reference proteome</keyword>
<keyword id="KW-0810">Translation regulation</keyword>
<feature type="chain" id="PRO_0000272979" description="Flagellar assembly factor FliW">
    <location>
        <begin position="1"/>
        <end position="141"/>
    </location>
</feature>